<organism>
    <name type="scientific">Escherichia coli (strain SE11)</name>
    <dbReference type="NCBI Taxonomy" id="409438"/>
    <lineage>
        <taxon>Bacteria</taxon>
        <taxon>Pseudomonadati</taxon>
        <taxon>Pseudomonadota</taxon>
        <taxon>Gammaproteobacteria</taxon>
        <taxon>Enterobacterales</taxon>
        <taxon>Enterobacteriaceae</taxon>
        <taxon>Escherichia</taxon>
    </lineage>
</organism>
<accession>B6I7Q9</accession>
<feature type="chain" id="PRO_1000135949" description="2,3-bisphosphoglycerate-dependent phosphoglycerate mutase">
    <location>
        <begin position="1"/>
        <end position="250"/>
    </location>
</feature>
<feature type="active site" description="Tele-phosphohistidine intermediate" evidence="1">
    <location>
        <position position="11"/>
    </location>
</feature>
<feature type="active site" description="Proton donor/acceptor" evidence="1">
    <location>
        <position position="89"/>
    </location>
</feature>
<feature type="binding site" evidence="1">
    <location>
        <begin position="10"/>
        <end position="17"/>
    </location>
    <ligand>
        <name>substrate</name>
    </ligand>
</feature>
<feature type="binding site" evidence="1">
    <location>
        <begin position="23"/>
        <end position="24"/>
    </location>
    <ligand>
        <name>substrate</name>
    </ligand>
</feature>
<feature type="binding site" evidence="1">
    <location>
        <position position="62"/>
    </location>
    <ligand>
        <name>substrate</name>
    </ligand>
</feature>
<feature type="binding site" evidence="1">
    <location>
        <begin position="89"/>
        <end position="92"/>
    </location>
    <ligand>
        <name>substrate</name>
    </ligand>
</feature>
<feature type="binding site" evidence="1">
    <location>
        <position position="100"/>
    </location>
    <ligand>
        <name>substrate</name>
    </ligand>
</feature>
<feature type="binding site" evidence="1">
    <location>
        <begin position="116"/>
        <end position="117"/>
    </location>
    <ligand>
        <name>substrate</name>
    </ligand>
</feature>
<feature type="binding site" evidence="1">
    <location>
        <begin position="185"/>
        <end position="186"/>
    </location>
    <ligand>
        <name>substrate</name>
    </ligand>
</feature>
<feature type="site" description="Transition state stabilizer" evidence="1">
    <location>
        <position position="184"/>
    </location>
</feature>
<name>GPMA_ECOSE</name>
<reference key="1">
    <citation type="journal article" date="2008" name="DNA Res.">
        <title>Complete genome sequence and comparative analysis of the wild-type commensal Escherichia coli strain SE11 isolated from a healthy adult.</title>
        <authorList>
            <person name="Oshima K."/>
            <person name="Toh H."/>
            <person name="Ogura Y."/>
            <person name="Sasamoto H."/>
            <person name="Morita H."/>
            <person name="Park S.-H."/>
            <person name="Ooka T."/>
            <person name="Iyoda S."/>
            <person name="Taylor T.D."/>
            <person name="Hayashi T."/>
            <person name="Itoh K."/>
            <person name="Hattori M."/>
        </authorList>
    </citation>
    <scope>NUCLEOTIDE SEQUENCE [LARGE SCALE GENOMIC DNA]</scope>
    <source>
        <strain>SE11</strain>
    </source>
</reference>
<protein>
    <recommendedName>
        <fullName evidence="1">2,3-bisphosphoglycerate-dependent phosphoglycerate mutase</fullName>
        <shortName evidence="1">BPG-dependent PGAM</shortName>
        <shortName evidence="1">PGAM</shortName>
        <shortName evidence="1">Phosphoglyceromutase</shortName>
        <shortName evidence="1">dPGM</shortName>
        <ecNumber evidence="1">5.4.2.11</ecNumber>
    </recommendedName>
</protein>
<sequence>MAVTKLVLVRHGESQWNKENRFTGWYDVDLSEKGVSEAKAAGKLLKEEGYSFDFAYTSVLKRAIHTLWNVLDELDQAWLPVEKSWKLNERHYGALQGLNKAETAEKYGDEQVKQWRRGFAVTPPELTKDDERYPGHDPRYAKLSEKELPLTESLALTIDRVIPYWNETILPRMKSGERVIIAAHGNSLRALVKYLDNMSEEEILELNIPTGVPLVYEFDENFKPLKRYYLGNADEIAAKAAAVANQGKAK</sequence>
<proteinExistence type="inferred from homology"/>
<comment type="function">
    <text evidence="1">Catalyzes the interconversion of 2-phosphoglycerate and 3-phosphoglycerate.</text>
</comment>
<comment type="catalytic activity">
    <reaction evidence="1">
        <text>(2R)-2-phosphoglycerate = (2R)-3-phosphoglycerate</text>
        <dbReference type="Rhea" id="RHEA:15901"/>
        <dbReference type="ChEBI" id="CHEBI:58272"/>
        <dbReference type="ChEBI" id="CHEBI:58289"/>
        <dbReference type="EC" id="5.4.2.11"/>
    </reaction>
</comment>
<comment type="pathway">
    <text evidence="1">Carbohydrate degradation; glycolysis; pyruvate from D-glyceraldehyde 3-phosphate: step 3/5.</text>
</comment>
<comment type="subunit">
    <text evidence="1">Homodimer.</text>
</comment>
<comment type="similarity">
    <text evidence="1">Belongs to the phosphoglycerate mutase family. BPG-dependent PGAM subfamily.</text>
</comment>
<dbReference type="EC" id="5.4.2.11" evidence="1"/>
<dbReference type="EMBL" id="AP009240">
    <property type="protein sequence ID" value="BAG76332.1"/>
    <property type="molecule type" value="Genomic_DNA"/>
</dbReference>
<dbReference type="RefSeq" id="WP_001295305.1">
    <property type="nucleotide sequence ID" value="NC_011415.1"/>
</dbReference>
<dbReference type="SMR" id="B6I7Q9"/>
<dbReference type="GeneID" id="93776726"/>
<dbReference type="KEGG" id="ecy:ECSE_0808"/>
<dbReference type="HOGENOM" id="CLU_033323_1_1_6"/>
<dbReference type="UniPathway" id="UPA00109">
    <property type="reaction ID" value="UER00186"/>
</dbReference>
<dbReference type="Proteomes" id="UP000008199">
    <property type="component" value="Chromosome"/>
</dbReference>
<dbReference type="GO" id="GO:0004619">
    <property type="term" value="F:phosphoglycerate mutase activity"/>
    <property type="evidence" value="ECO:0007669"/>
    <property type="project" value="UniProtKB-EC"/>
</dbReference>
<dbReference type="GO" id="GO:0006094">
    <property type="term" value="P:gluconeogenesis"/>
    <property type="evidence" value="ECO:0007669"/>
    <property type="project" value="UniProtKB-UniRule"/>
</dbReference>
<dbReference type="GO" id="GO:0006096">
    <property type="term" value="P:glycolytic process"/>
    <property type="evidence" value="ECO:0007669"/>
    <property type="project" value="UniProtKB-UniRule"/>
</dbReference>
<dbReference type="CDD" id="cd07067">
    <property type="entry name" value="HP_PGM_like"/>
    <property type="match status" value="1"/>
</dbReference>
<dbReference type="FunFam" id="3.40.50.1240:FF:000003">
    <property type="entry name" value="2,3-bisphosphoglycerate-dependent phosphoglycerate mutase"/>
    <property type="match status" value="1"/>
</dbReference>
<dbReference type="Gene3D" id="3.40.50.1240">
    <property type="entry name" value="Phosphoglycerate mutase-like"/>
    <property type="match status" value="1"/>
</dbReference>
<dbReference type="HAMAP" id="MF_01039">
    <property type="entry name" value="PGAM_GpmA"/>
    <property type="match status" value="1"/>
</dbReference>
<dbReference type="InterPro" id="IPR013078">
    <property type="entry name" value="His_Pase_superF_clade-1"/>
</dbReference>
<dbReference type="InterPro" id="IPR029033">
    <property type="entry name" value="His_PPase_superfam"/>
</dbReference>
<dbReference type="InterPro" id="IPR001345">
    <property type="entry name" value="PG/BPGM_mutase_AS"/>
</dbReference>
<dbReference type="InterPro" id="IPR005952">
    <property type="entry name" value="Phosphogly_mut1"/>
</dbReference>
<dbReference type="NCBIfam" id="TIGR01258">
    <property type="entry name" value="pgm_1"/>
    <property type="match status" value="1"/>
</dbReference>
<dbReference type="NCBIfam" id="NF010713">
    <property type="entry name" value="PRK14115.1"/>
    <property type="match status" value="1"/>
</dbReference>
<dbReference type="PANTHER" id="PTHR11931">
    <property type="entry name" value="PHOSPHOGLYCERATE MUTASE"/>
    <property type="match status" value="1"/>
</dbReference>
<dbReference type="Pfam" id="PF00300">
    <property type="entry name" value="His_Phos_1"/>
    <property type="match status" value="1"/>
</dbReference>
<dbReference type="PIRSF" id="PIRSF000709">
    <property type="entry name" value="6PFK_2-Ptase"/>
    <property type="match status" value="1"/>
</dbReference>
<dbReference type="SMART" id="SM00855">
    <property type="entry name" value="PGAM"/>
    <property type="match status" value="1"/>
</dbReference>
<dbReference type="SUPFAM" id="SSF53254">
    <property type="entry name" value="Phosphoglycerate mutase-like"/>
    <property type="match status" value="1"/>
</dbReference>
<dbReference type="PROSITE" id="PS00175">
    <property type="entry name" value="PG_MUTASE"/>
    <property type="match status" value="1"/>
</dbReference>
<gene>
    <name evidence="1" type="primary">gpmA</name>
    <name type="ordered locus">ECSE_0808</name>
</gene>
<evidence type="ECO:0000255" key="1">
    <source>
        <dbReference type="HAMAP-Rule" id="MF_01039"/>
    </source>
</evidence>
<keyword id="KW-0312">Gluconeogenesis</keyword>
<keyword id="KW-0324">Glycolysis</keyword>
<keyword id="KW-0413">Isomerase</keyword>